<feature type="chain" id="PRO_0000116293" description="65 kDa phosphoprotein">
    <location>
        <begin position="1"/>
        <end position="551"/>
    </location>
</feature>
<feature type="region of interest" description="Disordered" evidence="2">
    <location>
        <begin position="379"/>
        <end position="434"/>
    </location>
</feature>
<feature type="region of interest" description="Disordered" evidence="2">
    <location>
        <begin position="446"/>
        <end position="465"/>
    </location>
</feature>
<feature type="region of interest" description="Disordered" evidence="2">
    <location>
        <begin position="524"/>
        <end position="551"/>
    </location>
</feature>
<feature type="compositionally biased region" description="Acidic residues" evidence="2">
    <location>
        <begin position="385"/>
        <end position="401"/>
    </location>
</feature>
<feature type="compositionally biased region" description="Acidic residues" evidence="2">
    <location>
        <begin position="454"/>
        <end position="463"/>
    </location>
</feature>
<feature type="modified residue" description="Phosphoserine" evidence="3">
    <location>
        <position position="462"/>
    </location>
</feature>
<feature type="helix" evidence="5">
    <location>
        <begin position="99"/>
        <end position="102"/>
    </location>
</feature>
<comment type="function">
    <text evidence="1">Counteracts the host antiviral immune response when activated and phosphorylated, by preventing host IRF3 from entering the nucleus. Also inhibits the type I interferon production by inactivating the enzymatic activity of DNA sensor CGAS without affecting STING1. Participates in the transactivation of viral major immediate-early genes by the recruitment of host IFI16 to the promoters pf these genes.</text>
</comment>
<comment type="subunit">
    <text evidence="1">Interacts with host NCL/nucleolin. Interacts with host IFI16. Interacts with host CGAS; this interaction inhibits CGAS enzymatic activity.</text>
</comment>
<comment type="subcellular location">
    <subcellularLocation>
        <location evidence="1">Virion tegument</location>
    </subcellularLocation>
    <subcellularLocation>
        <location evidence="1">Host nucleus</location>
    </subcellularLocation>
    <subcellularLocation>
        <location evidence="1">Host cytoplasm</location>
    </subcellularLocation>
    <text evidence="1">As part of the incoming virion, pp65 is targeted to the nucleus immediately after infection. The newly synthesized pp65 is observed in the nucleus until some time after 48 hours postinfection. Thereafter, pp65 is probably exported and accumulates in the cytoplasm. Also found in dense bodies.</text>
</comment>
<comment type="PTM">
    <text evidence="1">Phosphorylation may play a role in the localization of the protein.</text>
</comment>
<comment type="similarity">
    <text evidence="4">Belongs to the herpesviridae UL82 family.</text>
</comment>
<evidence type="ECO:0000250" key="1">
    <source>
        <dbReference type="UniProtKB" id="P06725"/>
    </source>
</evidence>
<evidence type="ECO:0000256" key="2">
    <source>
        <dbReference type="SAM" id="MobiDB-lite"/>
    </source>
</evidence>
<evidence type="ECO:0000269" key="3">
    <source>
    </source>
</evidence>
<evidence type="ECO:0000305" key="4"/>
<evidence type="ECO:0007829" key="5">
    <source>
        <dbReference type="PDB" id="3BW9"/>
    </source>
</evidence>
<accession>P18139</accession>
<organismHost>
    <name type="scientific">Homo sapiens</name>
    <name type="common">Human</name>
    <dbReference type="NCBI Taxonomy" id="9606"/>
</organismHost>
<keyword id="KW-0002">3D-structure</keyword>
<keyword id="KW-0903">Direct protein sequencing</keyword>
<keyword id="KW-1035">Host cytoplasm</keyword>
<keyword id="KW-1048">Host nucleus</keyword>
<keyword id="KW-0597">Phosphoprotein</keyword>
<keyword id="KW-0468">Viral matrix protein</keyword>
<keyword id="KW-0946">Virion</keyword>
<keyword id="KW-0920">Virion tegument</keyword>
<sequence length="551" mass="61638">MASVLGPISGHVLKAVFSRGDTPVLPHETRLLQTGIHVRVSQPSLILVSQYTPDSTPCHRGDNQLQVQHTYFTGSEVENVSVNVHNPTGRSICPSQEPMSIYVYALPLKMLNIPSINVHHYPSAAERKHRHLPVADAVIHASGKQMWQARLTVSGLAWTRQQNQWKEPDVYYTSAFVFPTKDVALRHVVCAHELVCSMENTRATKMQVIGDQYVKVYLESFCEDVPSGKLFMHVTLGSDVEEDLTMTRNPQPFMRPHERNGFTVLCPKNMIIKPGKISHIMLDVAFTSHEHFGLLCPKSIPGLSISGNLLMNGQQIFLEVQAIRETVELRQYDPVAALFFFDIDLLLQRGPQYSEHPTFTSQYRIQGKLEYRHTWDRHDEGAAQGDDDVWTSGSDSDEELVTTERKTPRVTGGGAMAGASTSAGRKRKSASSATACTAGVMTRGRLKAESTVAPEEDTDEDSDNEIHNPAVFTWPPWQAGILARNLVPMVATVQGQNLKYQEFFWDANDIYRIFAELEGVWQPAAQPKRRRHRQDALPGPCIASTPKKHRG</sequence>
<protein>
    <recommendedName>
        <fullName>65 kDa phosphoprotein</fullName>
        <shortName>pp65</shortName>
    </recommendedName>
    <alternativeName>
        <fullName>64 kDa matrix phosphoprotein</fullName>
        <shortName>pp64</shortName>
    </alternativeName>
    <alternativeName>
        <fullName>GP64</fullName>
    </alternativeName>
    <alternativeName>
        <fullName>Phosphoprotein UL83</fullName>
    </alternativeName>
    <alternativeName>
        <fullName>Tegument protein UL83</fullName>
    </alternativeName>
</protein>
<organism>
    <name type="scientific">Human cytomegalovirus (strain Towne)</name>
    <name type="common">HHV-5</name>
    <name type="synonym">Human herpesvirus 5</name>
    <dbReference type="NCBI Taxonomy" id="10363"/>
    <lineage>
        <taxon>Viruses</taxon>
        <taxon>Duplodnaviria</taxon>
        <taxon>Heunggongvirae</taxon>
        <taxon>Peploviricota</taxon>
        <taxon>Herviviricetes</taxon>
        <taxon>Herpesvirales</taxon>
        <taxon>Orthoherpesviridae</taxon>
        <taxon>Betaherpesvirinae</taxon>
        <taxon>Cytomegalovirus</taxon>
        <taxon>Cytomegalovirus humanbeta5</taxon>
        <taxon>Human cytomegalovirus</taxon>
    </lineage>
</organism>
<proteinExistence type="evidence at protein level"/>
<name>PP65_HCMVT</name>
<reference key="1">
    <citation type="journal article" date="1991" name="Virology">
        <title>Human cytomegalovirus strain Towne pp65 gene: nucleotide sequence and expression in Escherichia coli.</title>
        <authorList>
            <person name="Pande H."/>
            <person name="Campo K."/>
            <person name="Tanamachi B."/>
            <person name="Zaia J.A."/>
        </authorList>
    </citation>
    <scope>NUCLEOTIDE SEQUENCE [GENOMIC DNA]</scope>
</reference>
<reference key="2">
    <citation type="journal article" date="1990" name="Virology">
        <title>Structural analysis of a 64-kDa major structural protein of human cytomegalovirus (Towne): identification of a phosphorylation site and comparison to pp65 of HCMV (AD169).</title>
        <authorList>
            <person name="Pande H."/>
            <person name="Lee T.D."/>
            <person name="Churchill M.A."/>
            <person name="Zaia J.A."/>
        </authorList>
    </citation>
    <scope>PARTIAL PROTEIN SEQUENCE</scope>
    <scope>PHOSPHORYLATION AT SER-462</scope>
</reference>
<gene>
    <name type="primary">UL83</name>
</gene>
<dbReference type="EMBL" id="M67443">
    <property type="protein sequence ID" value="AAA45994.1"/>
    <property type="molecule type" value="Genomic_DNA"/>
</dbReference>
<dbReference type="PDB" id="3BW9">
    <property type="method" value="X-ray"/>
    <property type="resolution" value="1.75 A"/>
    <property type="chains" value="C=93-104"/>
</dbReference>
<dbReference type="PDB" id="3BWA">
    <property type="method" value="X-ray"/>
    <property type="resolution" value="1.30 A"/>
    <property type="chains" value="C=178-185"/>
</dbReference>
<dbReference type="PDB" id="4QRR">
    <property type="method" value="X-ray"/>
    <property type="resolution" value="3.00 A"/>
    <property type="chains" value="P=113-121"/>
</dbReference>
<dbReference type="PDB" id="5D2L">
    <property type="method" value="X-ray"/>
    <property type="resolution" value="3.51 A"/>
    <property type="chains" value="Q/R/T/U=485-493"/>
</dbReference>
<dbReference type="PDB" id="5D2N">
    <property type="method" value="X-ray"/>
    <property type="resolution" value="2.10 A"/>
    <property type="chains" value="G/I=485-493"/>
</dbReference>
<dbReference type="PDBsum" id="3BW9"/>
<dbReference type="PDBsum" id="3BWA"/>
<dbReference type="PDBsum" id="4QRR"/>
<dbReference type="PDBsum" id="5D2L"/>
<dbReference type="PDBsum" id="5D2N"/>
<dbReference type="SMR" id="P18139"/>
<dbReference type="IntAct" id="P18139">
    <property type="interactions" value="1"/>
</dbReference>
<dbReference type="iPTMnet" id="P18139"/>
<dbReference type="EvolutionaryTrace" id="P18139"/>
<dbReference type="GO" id="GO:0030430">
    <property type="term" value="C:host cell cytoplasm"/>
    <property type="evidence" value="ECO:0007669"/>
    <property type="project" value="UniProtKB-SubCell"/>
</dbReference>
<dbReference type="GO" id="GO:0042025">
    <property type="term" value="C:host cell nucleus"/>
    <property type="evidence" value="ECO:0007669"/>
    <property type="project" value="UniProtKB-SubCell"/>
</dbReference>
<dbReference type="GO" id="GO:0019033">
    <property type="term" value="C:viral tegument"/>
    <property type="evidence" value="ECO:0007669"/>
    <property type="project" value="UniProtKB-SubCell"/>
</dbReference>
<dbReference type="GO" id="GO:0039660">
    <property type="term" value="F:structural constituent of virion"/>
    <property type="evidence" value="ECO:0007669"/>
    <property type="project" value="UniProtKB-KW"/>
</dbReference>
<dbReference type="InterPro" id="IPR036157">
    <property type="entry name" value="dUTPase-like_sf"/>
</dbReference>
<dbReference type="InterPro" id="IPR008649">
    <property type="entry name" value="Herpes_UL82/UL83"/>
</dbReference>
<dbReference type="Pfam" id="PF05784">
    <property type="entry name" value="Herpes_UL82_83"/>
    <property type="match status" value="1"/>
</dbReference>
<dbReference type="SUPFAM" id="SSF51283">
    <property type="entry name" value="dUTPase-like"/>
    <property type="match status" value="1"/>
</dbReference>